<dbReference type="EC" id="1.5.5.2" evidence="7"/>
<dbReference type="EMBL" id="U82381">
    <property type="protein sequence ID" value="AAB88789.1"/>
    <property type="molecule type" value="mRNA"/>
</dbReference>
<dbReference type="EMBL" id="AF120278">
    <property type="protein sequence ID" value="AAD24775.1"/>
    <property type="molecule type" value="mRNA"/>
</dbReference>
<dbReference type="EMBL" id="U79754">
    <property type="protein sequence ID" value="AAF21464.1"/>
    <property type="molecule type" value="mRNA"/>
</dbReference>
<dbReference type="EMBL" id="AC007326">
    <property type="status" value="NOT_ANNOTATED_CDS"/>
    <property type="molecule type" value="Genomic_DNA"/>
</dbReference>
<dbReference type="EMBL" id="BC068260">
    <property type="protein sequence ID" value="AAH68260.1"/>
    <property type="status" value="ALT_FRAME"/>
    <property type="molecule type" value="mRNA"/>
</dbReference>
<dbReference type="EMBL" id="BC094736">
    <property type="protein sequence ID" value="AAH94736.1"/>
    <property type="status" value="ALT_SEQ"/>
    <property type="molecule type" value="mRNA"/>
</dbReference>
<dbReference type="EMBL" id="BC118597">
    <property type="protein sequence ID" value="AAI18598.1"/>
    <property type="molecule type" value="mRNA"/>
</dbReference>
<dbReference type="EMBL" id="BC121809">
    <property type="protein sequence ID" value="AAI21810.1"/>
    <property type="molecule type" value="mRNA"/>
</dbReference>
<dbReference type="EMBL" id="AB209472">
    <property type="protein sequence ID" value="BAD92709.1"/>
    <property type="status" value="ALT_SEQ"/>
    <property type="molecule type" value="mRNA"/>
</dbReference>
<dbReference type="EMBL" id="AF010310">
    <property type="protein sequence ID" value="AAC39529.1"/>
    <property type="status" value="ALT_FRAME"/>
    <property type="molecule type" value="mRNA"/>
</dbReference>
<dbReference type="CCDS" id="CCDS13754.1">
    <molecule id="O43272-4"/>
</dbReference>
<dbReference type="CCDS" id="CCDS56223.1">
    <molecule id="O43272-2"/>
</dbReference>
<dbReference type="RefSeq" id="NP_001182155.2">
    <molecule id="O43272-2"/>
    <property type="nucleotide sequence ID" value="NM_001195226.2"/>
</dbReference>
<dbReference type="RefSeq" id="NP_001355179.2">
    <molecule id="O43272-2"/>
    <property type="nucleotide sequence ID" value="NM_001368250.2"/>
</dbReference>
<dbReference type="RefSeq" id="NP_057419.4">
    <molecule id="O43272-4"/>
    <property type="nucleotide sequence ID" value="NM_016335.4"/>
</dbReference>
<dbReference type="BioGRID" id="111609">
    <property type="interactions" value="19"/>
</dbReference>
<dbReference type="FunCoup" id="O43272">
    <property type="interactions" value="506"/>
</dbReference>
<dbReference type="IntAct" id="O43272">
    <property type="interactions" value="7"/>
</dbReference>
<dbReference type="STRING" id="9606.ENSP00000481127"/>
<dbReference type="DrugBank" id="DB06756">
    <property type="generic name" value="Betaine"/>
</dbReference>
<dbReference type="DrugBank" id="DB00172">
    <property type="generic name" value="Proline"/>
</dbReference>
<dbReference type="iPTMnet" id="O43272"/>
<dbReference type="PhosphoSitePlus" id="O43272"/>
<dbReference type="SwissPalm" id="O43272"/>
<dbReference type="BioMuta" id="PRODH"/>
<dbReference type="jPOST" id="O43272"/>
<dbReference type="MassIVE" id="O43272"/>
<dbReference type="PaxDb" id="9606-ENSP00000481127"/>
<dbReference type="PeptideAtlas" id="O43272"/>
<dbReference type="ProteomicsDB" id="48843">
    <molecule id="O43272-4"/>
</dbReference>
<dbReference type="ProteomicsDB" id="48844">
    <molecule id="O43272-1"/>
</dbReference>
<dbReference type="ProteomicsDB" id="48845">
    <molecule id="O43272-2"/>
</dbReference>
<dbReference type="Antibodypedia" id="22803">
    <property type="antibodies" value="314 antibodies from 32 providers"/>
</dbReference>
<dbReference type="DNASU" id="5625"/>
<dbReference type="Ensembl" id="ENST00000334029.6">
    <molecule id="O43272-2"/>
    <property type="protein sequence ID" value="ENSP00000334726.2"/>
    <property type="gene ID" value="ENSG00000100033.17"/>
</dbReference>
<dbReference type="Ensembl" id="ENST00000357068.11">
    <molecule id="O43272-4"/>
    <property type="protein sequence ID" value="ENSP00000349577.6"/>
    <property type="gene ID" value="ENSG00000100033.17"/>
</dbReference>
<dbReference type="Ensembl" id="ENST00000420436.5">
    <molecule id="O43272-2"/>
    <property type="protein sequence ID" value="ENSP00000410805.1"/>
    <property type="gene ID" value="ENSG00000100033.17"/>
</dbReference>
<dbReference type="Ensembl" id="ENST00000610940.4">
    <molecule id="O43272-4"/>
    <property type="protein sequence ID" value="ENSP00000480347.1"/>
    <property type="gene ID" value="ENSG00000100033.17"/>
</dbReference>
<dbReference type="GeneID" id="5625"/>
<dbReference type="KEGG" id="hsa:5625"/>
<dbReference type="MANE-Select" id="ENST00000357068.11">
    <property type="protein sequence ID" value="ENSP00000349577.6"/>
    <property type="RefSeq nucleotide sequence ID" value="NM_016335.6"/>
    <property type="RefSeq protein sequence ID" value="NP_057419.5"/>
</dbReference>
<dbReference type="UCSC" id="uc062bjw.1">
    <molecule id="O43272-4"/>
    <property type="organism name" value="human"/>
</dbReference>
<dbReference type="AGR" id="HGNC:9453"/>
<dbReference type="CTD" id="5625"/>
<dbReference type="DisGeNET" id="5625"/>
<dbReference type="GeneCards" id="PRODH"/>
<dbReference type="HGNC" id="HGNC:9453">
    <property type="gene designation" value="PRODH"/>
</dbReference>
<dbReference type="HPA" id="ENSG00000100033">
    <property type="expression patterns" value="Tissue enhanced (brain, choroid plexus, skeletal muscle)"/>
</dbReference>
<dbReference type="MalaCards" id="PRODH"/>
<dbReference type="MIM" id="181500">
    <property type="type" value="phenotype"/>
</dbReference>
<dbReference type="MIM" id="239500">
    <property type="type" value="phenotype"/>
</dbReference>
<dbReference type="MIM" id="600850">
    <property type="type" value="phenotype"/>
</dbReference>
<dbReference type="MIM" id="606810">
    <property type="type" value="gene"/>
</dbReference>
<dbReference type="neXtProt" id="NX_O43272"/>
<dbReference type="OpenTargets" id="ENSG00000100033"/>
<dbReference type="Orphanet" id="419">
    <property type="disease" value="Hyperprolinemia type 1"/>
</dbReference>
<dbReference type="PharmGKB" id="PA33801"/>
<dbReference type="VEuPathDB" id="HostDB:ENSG00000100033"/>
<dbReference type="eggNOG" id="KOG0186">
    <property type="taxonomic scope" value="Eukaryota"/>
</dbReference>
<dbReference type="GeneTree" id="ENSGT00390000006265"/>
<dbReference type="InParanoid" id="O43272"/>
<dbReference type="OMA" id="EGMLMCL"/>
<dbReference type="OrthoDB" id="5464at2759"/>
<dbReference type="PAN-GO" id="O43272">
    <property type="GO annotations" value="4 GO annotations based on evolutionary models"/>
</dbReference>
<dbReference type="PhylomeDB" id="O43272"/>
<dbReference type="TreeFam" id="TF313544"/>
<dbReference type="BioCyc" id="MetaCyc:HS01958-MONOMER"/>
<dbReference type="BRENDA" id="1.5.5.2">
    <property type="organism ID" value="2681"/>
</dbReference>
<dbReference type="BRENDA" id="1.5.99.B2">
    <property type="organism ID" value="2681"/>
</dbReference>
<dbReference type="PathwayCommons" id="O43272"/>
<dbReference type="Reactome" id="R-HSA-70688">
    <property type="pathway name" value="Proline catabolism"/>
</dbReference>
<dbReference type="SignaLink" id="O43272"/>
<dbReference type="SIGNOR" id="O43272"/>
<dbReference type="UniPathway" id="UPA00261">
    <property type="reaction ID" value="UER00373"/>
</dbReference>
<dbReference type="BioGRID-ORCS" id="5625">
    <property type="hits" value="107 hits in 1149 CRISPR screens"/>
</dbReference>
<dbReference type="ChiTaRS" id="PRODH">
    <property type="organism name" value="human"/>
</dbReference>
<dbReference type="GeneWiki" id="Proline_oxidase"/>
<dbReference type="GenomeRNAi" id="5625"/>
<dbReference type="Pharos" id="O43272">
    <property type="development level" value="Tbio"/>
</dbReference>
<dbReference type="PRO" id="PR:O43272"/>
<dbReference type="Proteomes" id="UP000005640">
    <property type="component" value="Chromosome 22"/>
</dbReference>
<dbReference type="RNAct" id="O43272">
    <property type="molecule type" value="protein"/>
</dbReference>
<dbReference type="Bgee" id="ENSG00000100033">
    <property type="expression patterns" value="Expressed in skin of leg and 97 other cell types or tissues"/>
</dbReference>
<dbReference type="ExpressionAtlas" id="O43272">
    <property type="expression patterns" value="baseline and differential"/>
</dbReference>
<dbReference type="GO" id="GO:0043231">
    <property type="term" value="C:intracellular membrane-bounded organelle"/>
    <property type="evidence" value="ECO:0000314"/>
    <property type="project" value="HPA"/>
</dbReference>
<dbReference type="GO" id="GO:0005743">
    <property type="term" value="C:mitochondrial inner membrane"/>
    <property type="evidence" value="ECO:0000304"/>
    <property type="project" value="Reactome"/>
</dbReference>
<dbReference type="GO" id="GO:0005759">
    <property type="term" value="C:mitochondrial matrix"/>
    <property type="evidence" value="ECO:0007669"/>
    <property type="project" value="UniProtKB-SubCell"/>
</dbReference>
<dbReference type="GO" id="GO:0005739">
    <property type="term" value="C:mitochondrion"/>
    <property type="evidence" value="ECO:0000314"/>
    <property type="project" value="HPA"/>
</dbReference>
<dbReference type="GO" id="GO:0005654">
    <property type="term" value="C:nucleoplasm"/>
    <property type="evidence" value="ECO:0000314"/>
    <property type="project" value="HPA"/>
</dbReference>
<dbReference type="GO" id="GO:0071949">
    <property type="term" value="F:FAD binding"/>
    <property type="evidence" value="ECO:0000314"/>
    <property type="project" value="UniProtKB"/>
</dbReference>
<dbReference type="GO" id="GO:0004657">
    <property type="term" value="F:proline dehydrogenase activity"/>
    <property type="evidence" value="ECO:0000314"/>
    <property type="project" value="UniProtKB"/>
</dbReference>
<dbReference type="GO" id="GO:0019470">
    <property type="term" value="P:4-hydroxyproline catabolic process"/>
    <property type="evidence" value="ECO:0000304"/>
    <property type="project" value="BHF-UCL"/>
</dbReference>
<dbReference type="GO" id="GO:0008631">
    <property type="term" value="P:intrinsic apoptotic signaling pathway in response to oxidative stress"/>
    <property type="evidence" value="ECO:0000303"/>
    <property type="project" value="UniProtKB"/>
</dbReference>
<dbReference type="GO" id="GO:0006562">
    <property type="term" value="P:proline catabolic process"/>
    <property type="evidence" value="ECO:0000304"/>
    <property type="project" value="Reactome"/>
</dbReference>
<dbReference type="GO" id="GO:0010133">
    <property type="term" value="P:proline catabolic process to glutamate"/>
    <property type="evidence" value="ECO:0000318"/>
    <property type="project" value="GO_Central"/>
</dbReference>
<dbReference type="GO" id="GO:0006560">
    <property type="term" value="P:proline metabolic process"/>
    <property type="evidence" value="ECO:0000304"/>
    <property type="project" value="ProtInc"/>
</dbReference>
<dbReference type="GO" id="GO:1903376">
    <property type="term" value="P:regulation of oxidative stress-induced neuron intrinsic apoptotic signaling pathway"/>
    <property type="evidence" value="ECO:0000314"/>
    <property type="project" value="ParkinsonsUK-UCL"/>
</dbReference>
<dbReference type="FunFam" id="3.20.20.220:FF:000006">
    <property type="entry name" value="Proline dehydrogenase"/>
    <property type="match status" value="1"/>
</dbReference>
<dbReference type="Gene3D" id="3.20.20.220">
    <property type="match status" value="2"/>
</dbReference>
<dbReference type="InterPro" id="IPR029041">
    <property type="entry name" value="FAD-linked_oxidoreductase-like"/>
</dbReference>
<dbReference type="InterPro" id="IPR002872">
    <property type="entry name" value="Proline_DH_dom"/>
</dbReference>
<dbReference type="InterPro" id="IPR015659">
    <property type="entry name" value="Proline_oxidase"/>
</dbReference>
<dbReference type="PANTHER" id="PTHR13914:SF0">
    <property type="entry name" value="PROLINE DEHYDROGENASE 1, MITOCHONDRIAL"/>
    <property type="match status" value="1"/>
</dbReference>
<dbReference type="PANTHER" id="PTHR13914">
    <property type="entry name" value="PROLINE OXIDASE"/>
    <property type="match status" value="1"/>
</dbReference>
<dbReference type="Pfam" id="PF01619">
    <property type="entry name" value="Pro_dh"/>
    <property type="match status" value="1"/>
</dbReference>
<dbReference type="SUPFAM" id="SSF51730">
    <property type="entry name" value="FAD-linked oxidoreductase"/>
    <property type="match status" value="1"/>
</dbReference>
<sequence>MALRRALPALRPCIPRFVPLSTAPASREQPAAGPAAVPGGGSATAVRPPVPAVDFGNAQEAYRSRRTWELARSLLVLRLCAWPALLARHEQLLYVSRKLLGQRLFNKLMKMTFYGHFVAGEDQESIQPLLRHYRAFGVSAILDYGVEEDLSPEEAEHKEMESCTSAAERDGSGTNKRDKQYQAHWAFGDRRNGVISARTYFYANEAKCDSHMETFLRCIEASGRVSDDGFIAIKLTALGRPQFLLQFSEVLAKWRCFFHQMAVEQGQAGLAAMDTKLEVAVLQESVAKLGIASRAEIEDWFTAETLGVSGTMDLLDWSSLIDSRTKLSKHLVVPNAQTGQLEPLLSRFTEEEELQMTRMLQRMDVLAKKATEMGVRLMVDAEQTYFQPAISRLTLEMQRKFNVEKPLIFNTYQCYLKDAYDNVTLDVELARREGWCFGAKLVRGAYLAQERARAAEIGYEDPINPTYEATNAMYHRCLDYVLEELKHNAKAKVMVASHNEDTVRFALRRMEELGLHPADHRVYFGQLLGMCDQISFPLGQAGYPVYKYVPYGPVMEVLPYLSRRALENSSLMKGTHRERQLLWLELLRRLRTGNLFHRPA</sequence>
<evidence type="ECO:0000250" key="1">
    <source>
        <dbReference type="UniProtKB" id="Q9WU79"/>
    </source>
</evidence>
<evidence type="ECO:0000255" key="2"/>
<evidence type="ECO:0000256" key="3">
    <source>
        <dbReference type="SAM" id="MobiDB-lite"/>
    </source>
</evidence>
<evidence type="ECO:0000269" key="4">
    <source>
    </source>
</evidence>
<evidence type="ECO:0000269" key="5">
    <source>
    </source>
</evidence>
<evidence type="ECO:0000269" key="6">
    <source>
    </source>
</evidence>
<evidence type="ECO:0000269" key="7">
    <source>
    </source>
</evidence>
<evidence type="ECO:0000269" key="8">
    <source>
    </source>
</evidence>
<evidence type="ECO:0000269" key="9">
    <source>
    </source>
</evidence>
<evidence type="ECO:0000269" key="10">
    <source>
    </source>
</evidence>
<evidence type="ECO:0000303" key="11">
    <source>
    </source>
</evidence>
<evidence type="ECO:0000303" key="12">
    <source>
    </source>
</evidence>
<evidence type="ECO:0000303" key="13">
    <source>
    </source>
</evidence>
<evidence type="ECO:0000303" key="14">
    <source>
    </source>
</evidence>
<evidence type="ECO:0000305" key="15"/>
<evidence type="ECO:0000312" key="16">
    <source>
        <dbReference type="HGNC" id="HGNC:9453"/>
    </source>
</evidence>
<reference key="1">
    <citation type="journal article" date="1997" name="Hum. Genet.">
        <title>A human homologue of the Drosophila melanogaster sluggish-A (proline oxidase) gene maps to 22q11.2, and is a candidate gene for type-I hyperprolinaemia.</title>
        <authorList>
            <person name="Campbell H.D."/>
            <person name="Webb G.C."/>
            <person name="Young I.G."/>
        </authorList>
    </citation>
    <scope>NUCLEOTIDE SEQUENCE [MRNA] (ISOFORM 3)</scope>
    <source>
        <tissue>Brain</tissue>
    </source>
</reference>
<reference key="2">
    <citation type="journal article" date="1999" name="Nat. Genet.">
        <title>The gene encoding proline dehydrogenase modulates sensorimotor gating in mice.</title>
        <authorList>
            <person name="Gogos J.A."/>
            <person name="Santha M."/>
            <person name="Takacs Z."/>
            <person name="Beck K.D."/>
            <person name="Luine V."/>
            <person name="Lucas L.R."/>
            <person name="Nadler J.V."/>
            <person name="Karayiorgou M."/>
        </authorList>
    </citation>
    <scope>NUCLEOTIDE SEQUENCE [MRNA] (ISOFORM 3)</scope>
    <source>
        <tissue>Cerebellum</tissue>
        <tissue>Kidney</tissue>
    </source>
</reference>
<reference key="3">
    <citation type="journal article" date="2005" name="Am. J. Hum. Genet.">
        <title>Functional consequences of PRODH missense mutations.</title>
        <authorList>
            <person name="Bender H.-U."/>
            <person name="Almashanu S."/>
            <person name="Steel G."/>
            <person name="Hu C.-A."/>
            <person name="Lin W.-W."/>
            <person name="Willis A."/>
            <person name="Pulver A."/>
            <person name="Valle D."/>
        </authorList>
    </citation>
    <scope>NUCLEOTIDE SEQUENCE [MRNA] (ISOFORM 1)</scope>
    <scope>FUNCTION</scope>
    <scope>CATALYTIC ACTIVITY</scope>
    <scope>COFACTOR</scope>
    <scope>VARIANT VAL-167</scope>
    <scope>CHARACTERIZATION OF VARIANTS HYRPRO1 MET-289; ASN-426; MET-427; HIS-431; PRO-441; CYS-453; SER-455; THR-472 AND GLN-521</scope>
    <scope>CHARACTERIZATION OF VARIANTS GLN-19; VAL-167; ARG-185; LEU-406 AND MET-466</scope>
    <source>
        <tissue>Kidney</tissue>
    </source>
</reference>
<reference key="4">
    <citation type="journal article" date="1999" name="Nature">
        <title>The DNA sequence of human chromosome 22.</title>
        <authorList>
            <person name="Dunham I."/>
            <person name="Hunt A.R."/>
            <person name="Collins J.E."/>
            <person name="Bruskiewich R."/>
            <person name="Beare D.M."/>
            <person name="Clamp M."/>
            <person name="Smink L.J."/>
            <person name="Ainscough R."/>
            <person name="Almeida J.P."/>
            <person name="Babbage A.K."/>
            <person name="Bagguley C."/>
            <person name="Bailey J."/>
            <person name="Barlow K.F."/>
            <person name="Bates K.N."/>
            <person name="Beasley O.P."/>
            <person name="Bird C.P."/>
            <person name="Blakey S.E."/>
            <person name="Bridgeman A.M."/>
            <person name="Buck D."/>
            <person name="Burgess J."/>
            <person name="Burrill W.D."/>
            <person name="Burton J."/>
            <person name="Carder C."/>
            <person name="Carter N.P."/>
            <person name="Chen Y."/>
            <person name="Clark G."/>
            <person name="Clegg S.M."/>
            <person name="Cobley V.E."/>
            <person name="Cole C.G."/>
            <person name="Collier R.E."/>
            <person name="Connor R."/>
            <person name="Conroy D."/>
            <person name="Corby N.R."/>
            <person name="Coville G.J."/>
            <person name="Cox A.V."/>
            <person name="Davis J."/>
            <person name="Dawson E."/>
            <person name="Dhami P.D."/>
            <person name="Dockree C."/>
            <person name="Dodsworth S.J."/>
            <person name="Durbin R.M."/>
            <person name="Ellington A.G."/>
            <person name="Evans K.L."/>
            <person name="Fey J.M."/>
            <person name="Fleming K."/>
            <person name="French L."/>
            <person name="Garner A.A."/>
            <person name="Gilbert J.G.R."/>
            <person name="Goward M.E."/>
            <person name="Grafham D.V."/>
            <person name="Griffiths M.N.D."/>
            <person name="Hall C."/>
            <person name="Hall R.E."/>
            <person name="Hall-Tamlyn G."/>
            <person name="Heathcott R.W."/>
            <person name="Ho S."/>
            <person name="Holmes S."/>
            <person name="Hunt S.E."/>
            <person name="Jones M.C."/>
            <person name="Kershaw J."/>
            <person name="Kimberley A.M."/>
            <person name="King A."/>
            <person name="Laird G.K."/>
            <person name="Langford C.F."/>
            <person name="Leversha M.A."/>
            <person name="Lloyd C."/>
            <person name="Lloyd D.M."/>
            <person name="Martyn I.D."/>
            <person name="Mashreghi-Mohammadi M."/>
            <person name="Matthews L.H."/>
            <person name="Mccann O.T."/>
            <person name="Mcclay J."/>
            <person name="Mclaren S."/>
            <person name="McMurray A.A."/>
            <person name="Milne S.A."/>
            <person name="Mortimore B.J."/>
            <person name="Odell C.N."/>
            <person name="Pavitt R."/>
            <person name="Pearce A.V."/>
            <person name="Pearson D."/>
            <person name="Phillimore B.J.C.T."/>
            <person name="Phillips S.H."/>
            <person name="Plumb R.W."/>
            <person name="Ramsay H."/>
            <person name="Ramsey Y."/>
            <person name="Rogers L."/>
            <person name="Ross M.T."/>
            <person name="Scott C.E."/>
            <person name="Sehra H.K."/>
            <person name="Skuce C.D."/>
            <person name="Smalley S."/>
            <person name="Smith M.L."/>
            <person name="Soderlund C."/>
            <person name="Spragon L."/>
            <person name="Steward C.A."/>
            <person name="Sulston J.E."/>
            <person name="Swann R.M."/>
            <person name="Vaudin M."/>
            <person name="Wall M."/>
            <person name="Wallis J.M."/>
            <person name="Whiteley M.N."/>
            <person name="Willey D.L."/>
            <person name="Williams L."/>
            <person name="Williams S.A."/>
            <person name="Williamson H."/>
            <person name="Wilmer T.E."/>
            <person name="Wilming L."/>
            <person name="Wright C.L."/>
            <person name="Hubbard T."/>
            <person name="Bentley D.R."/>
            <person name="Beck S."/>
            <person name="Rogers J."/>
            <person name="Shimizu N."/>
            <person name="Minoshima S."/>
            <person name="Kawasaki K."/>
            <person name="Sasaki T."/>
            <person name="Asakawa S."/>
            <person name="Kudoh J."/>
            <person name="Shintani A."/>
            <person name="Shibuya K."/>
            <person name="Yoshizaki Y."/>
            <person name="Aoki N."/>
            <person name="Mitsuyama S."/>
            <person name="Roe B.A."/>
            <person name="Chen F."/>
            <person name="Chu L."/>
            <person name="Crabtree J."/>
            <person name="Deschamps S."/>
            <person name="Do A."/>
            <person name="Do T."/>
            <person name="Dorman A."/>
            <person name="Fang F."/>
            <person name="Fu Y."/>
            <person name="Hu P."/>
            <person name="Hua A."/>
            <person name="Kenton S."/>
            <person name="Lai H."/>
            <person name="Lao H.I."/>
            <person name="Lewis J."/>
            <person name="Lewis S."/>
            <person name="Lin S.-P."/>
            <person name="Loh P."/>
            <person name="Malaj E."/>
            <person name="Nguyen T."/>
            <person name="Pan H."/>
            <person name="Phan S."/>
            <person name="Qi S."/>
            <person name="Qian Y."/>
            <person name="Ray L."/>
            <person name="Ren Q."/>
            <person name="Shaull S."/>
            <person name="Sloan D."/>
            <person name="Song L."/>
            <person name="Wang Q."/>
            <person name="Wang Y."/>
            <person name="Wang Z."/>
            <person name="White J."/>
            <person name="Willingham D."/>
            <person name="Wu H."/>
            <person name="Yao Z."/>
            <person name="Zhan M."/>
            <person name="Zhang G."/>
            <person name="Chissoe S."/>
            <person name="Murray J."/>
            <person name="Miller N."/>
            <person name="Minx P."/>
            <person name="Fulton R."/>
            <person name="Johnson D."/>
            <person name="Bemis G."/>
            <person name="Bentley D."/>
            <person name="Bradshaw H."/>
            <person name="Bourne S."/>
            <person name="Cordes M."/>
            <person name="Du Z."/>
            <person name="Fulton L."/>
            <person name="Goela D."/>
            <person name="Graves T."/>
            <person name="Hawkins J."/>
            <person name="Hinds K."/>
            <person name="Kemp K."/>
            <person name="Latreille P."/>
            <person name="Layman D."/>
            <person name="Ozersky P."/>
            <person name="Rohlfing T."/>
            <person name="Scheet P."/>
            <person name="Walker C."/>
            <person name="Wamsley A."/>
            <person name="Wohldmann P."/>
            <person name="Pepin K."/>
            <person name="Nelson J."/>
            <person name="Korf I."/>
            <person name="Bedell J.A."/>
            <person name="Hillier L.W."/>
            <person name="Mardis E."/>
            <person name="Waterston R."/>
            <person name="Wilson R."/>
            <person name="Emanuel B.S."/>
            <person name="Shaikh T."/>
            <person name="Kurahashi H."/>
            <person name="Saitta S."/>
            <person name="Budarf M.L."/>
            <person name="McDermid H.E."/>
            <person name="Johnson A."/>
            <person name="Wong A.C.C."/>
            <person name="Morrow B.E."/>
            <person name="Edelmann L."/>
            <person name="Kim U.J."/>
            <person name="Shizuya H."/>
            <person name="Simon M.I."/>
            <person name="Dumanski J.P."/>
            <person name="Peyrard M."/>
            <person name="Kedra D."/>
            <person name="Seroussi E."/>
            <person name="Fransson I."/>
            <person name="Tapia I."/>
            <person name="Bruder C.E."/>
            <person name="O'Brien K.P."/>
            <person name="Wilkinson P."/>
            <person name="Bodenteich A."/>
            <person name="Hartman K."/>
            <person name="Hu X."/>
            <person name="Khan A.S."/>
            <person name="Lane L."/>
            <person name="Tilahun Y."/>
            <person name="Wright H."/>
        </authorList>
    </citation>
    <scope>NUCLEOTIDE SEQUENCE [LARGE SCALE GENOMIC DNA]</scope>
</reference>
<reference key="5">
    <citation type="journal article" date="2004" name="Genome Res.">
        <title>The status, quality, and expansion of the NIH full-length cDNA project: the Mammalian Gene Collection (MGC).</title>
        <authorList>
            <consortium name="The MGC Project Team"/>
        </authorList>
    </citation>
    <scope>NUCLEOTIDE SEQUENCE [LARGE SCALE MRNA] (ISOFORMS 1 AND 2)</scope>
    <scope>VARIANT GLN-521</scope>
    <source>
        <tissue>Brain</tissue>
    </source>
</reference>
<reference key="6">
    <citation type="submission" date="2005-03" db="EMBL/GenBank/DDBJ databases">
        <authorList>
            <person name="Totoki Y."/>
            <person name="Toyoda A."/>
            <person name="Takeda T."/>
            <person name="Sakaki Y."/>
            <person name="Tanaka A."/>
            <person name="Yokoyama S."/>
            <person name="Ohara O."/>
            <person name="Nagase T."/>
            <person name="Kikuno R.F."/>
        </authorList>
    </citation>
    <scope>NUCLEOTIDE SEQUENCE [LARGE SCALE MRNA] OF 337-600 (ISOFORMS 1/2/3)</scope>
    <source>
        <tissue>Brain</tissue>
    </source>
</reference>
<reference key="7">
    <citation type="journal article" date="1997" name="Nature">
        <title>A model for p53-induced apoptosis.</title>
        <authorList>
            <person name="Polyak K."/>
            <person name="Xia Y."/>
            <person name="Zweier J.L."/>
            <person name="Kinzler K.W."/>
            <person name="Vogelstein B."/>
        </authorList>
    </citation>
    <scope>NUCLEOTIDE SEQUENCE [MRNA] OF 444-600</scope>
    <scope>INDUCTION BY TP53</scope>
</reference>
<reference key="8">
    <citation type="journal article" date="2002" name="Hum. Mol. Genet.">
        <title>PRODH mutations and hyperprolinemia in a subset of schizophrenic patients.</title>
        <authorList>
            <person name="Jacquet H."/>
            <person name="Raux G."/>
            <person name="Thibaut F."/>
            <person name="Hecketsweiler B."/>
            <person name="Houy E."/>
            <person name="Demilly C."/>
            <person name="Haouzir S."/>
            <person name="Allio G."/>
            <person name="Fouldrin G."/>
            <person name="Drouin V."/>
            <person name="Bou J."/>
            <person name="Petit M."/>
            <person name="Campion D."/>
            <person name="Frebourg T."/>
        </authorList>
    </citation>
    <scope>VARIANTS HYRPRO1 MET-289; HIS-431; PRO-441; CYS-453; SER-455; THR-472 AND GLN-521</scope>
    <scope>INVOLVEMENT IN HYRPRO1</scope>
</reference>
<reference key="9">
    <citation type="journal article" date="2002" name="Proc. Natl. Acad. Sci. U.S.A.">
        <title>Genetic variation at the 22q11 PRODH2/DGCR6 locus presents an unusual pattern and increases susceptibility to schizophrenia.</title>
        <authorList>
            <person name="Liu H."/>
            <person name="Heath S.C."/>
            <person name="Sobin C."/>
            <person name="Roos J.L."/>
            <person name="Galke B.L."/>
            <person name="Blundell M.L."/>
            <person name="Lenane M."/>
            <person name="Robertson B."/>
            <person name="Wijsman E.M."/>
            <person name="Rapoport J.L."/>
            <person name="Gogos J.A."/>
            <person name="Karayiorgou M."/>
        </authorList>
    </citation>
    <scope>VARIANTS LEU-406; MET-427; PRO-441; CYS-453; MET-466 AND THR-472</scope>
    <scope>VARIANT HYRPRO1 GLN-521</scope>
    <scope>INVOLVEMENT IN SCZD4</scope>
</reference>
<reference key="10">
    <citation type="journal article" date="2006" name="Science">
        <title>The consensus coding sequences of human breast and colorectal cancers.</title>
        <authorList>
            <person name="Sjoeblom T."/>
            <person name="Jones S."/>
            <person name="Wood L.D."/>
            <person name="Parsons D.W."/>
            <person name="Lin J."/>
            <person name="Barber T.D."/>
            <person name="Mandelker D."/>
            <person name="Leary R.J."/>
            <person name="Ptak J."/>
            <person name="Silliman N."/>
            <person name="Szabo S."/>
            <person name="Buckhaults P."/>
            <person name="Farrell C."/>
            <person name="Meeh P."/>
            <person name="Markowitz S.D."/>
            <person name="Willis J."/>
            <person name="Dawson D."/>
            <person name="Willson J.K.V."/>
            <person name="Gazdar A.F."/>
            <person name="Hartigan J."/>
            <person name="Wu L."/>
            <person name="Liu C."/>
            <person name="Parmigiani G."/>
            <person name="Park B.H."/>
            <person name="Bachman K.E."/>
            <person name="Papadopoulos N."/>
            <person name="Vogelstein B."/>
            <person name="Kinzler K.W."/>
            <person name="Velculescu V.E."/>
        </authorList>
    </citation>
    <scope>VARIANT [LARGE SCALE ANALYSIS] SER-488</scope>
</reference>
<reference key="11">
    <citation type="journal article" date="2007" name="Hum. Mol. Genet.">
        <title>Involvement of hyperprolinemia in cognitive and psychiatric features of the 22q11 deletion syndrome.</title>
        <authorList>
            <person name="Raux G."/>
            <person name="Bumsel E."/>
            <person name="Hecketsweiler B."/>
            <person name="van Amelsvoort T."/>
            <person name="Zinkstok J."/>
            <person name="Manouvrier-Hanu S."/>
            <person name="Fantini C."/>
            <person name="Breviere G.-M.M."/>
            <person name="Di Rosa G."/>
            <person name="Pustorino G."/>
            <person name="Vogels A."/>
            <person name="Swillen A."/>
            <person name="Legallic S."/>
            <person name="Bou J."/>
            <person name="Opolczynski G."/>
            <person name="Drouin-Garraud V."/>
            <person name="Lemarchand M."/>
            <person name="Philip N."/>
            <person name="Gerard-Desplanches A."/>
            <person name="Carlier M."/>
            <person name="Philippe A."/>
            <person name="Nolen M.C."/>
            <person name="Heron D."/>
            <person name="Sarda P."/>
            <person name="Lacombe D."/>
            <person name="Coizet C."/>
            <person name="Alembik Y."/>
            <person name="Layet V."/>
            <person name="Afenjar A."/>
            <person name="Hannequin D."/>
            <person name="Demily C."/>
            <person name="Petit M."/>
            <person name="Thibaut F."/>
            <person name="Frebourg T."/>
            <person name="Campion D."/>
        </authorList>
    </citation>
    <scope>VARIANTS ASN-275 AND ASP-444</scope>
    <scope>VARIANT HYRPRO1 HIS-431</scope>
</reference>
<keyword id="KW-0007">Acetylation</keyword>
<keyword id="KW-0025">Alternative splicing</keyword>
<keyword id="KW-0225">Disease variant</keyword>
<keyword id="KW-0274">FAD</keyword>
<keyword id="KW-0285">Flavoprotein</keyword>
<keyword id="KW-0496">Mitochondrion</keyword>
<keyword id="KW-0560">Oxidoreductase</keyword>
<keyword id="KW-0642">Proline metabolism</keyword>
<keyword id="KW-1267">Proteomics identification</keyword>
<keyword id="KW-1185">Reference proteome</keyword>
<keyword id="KW-1211">Schizophrenia</keyword>
<keyword id="KW-0809">Transit peptide</keyword>
<feature type="transit peptide" description="Mitochondrion" evidence="2">
    <location>
        <begin position="1"/>
        <end status="unknown"/>
    </location>
</feature>
<feature type="chain" id="PRO_0000025800" description="Proline dehydrogenase 1, mitochondrial">
    <location>
        <begin status="unknown"/>
        <end position="600"/>
    </location>
</feature>
<feature type="region of interest" description="Disordered" evidence="3">
    <location>
        <begin position="155"/>
        <end position="177"/>
    </location>
</feature>
<feature type="modified residue" description="N6-acetyllysine" evidence="1">
    <location>
        <position position="368"/>
    </location>
</feature>
<feature type="modified residue" description="N6-acetyllysine" evidence="1">
    <location>
        <position position="486"/>
    </location>
</feature>
<feature type="splice variant" id="VSP_021848" description="In isoform 2." evidence="13">
    <location>
        <begin position="1"/>
        <end position="108"/>
    </location>
</feature>
<feature type="splice variant" id="VSP_040848" description="In isoform 3." evidence="11 14">
    <location>
        <begin position="1"/>
        <end position="84"/>
    </location>
</feature>
<feature type="splice variant" id="VSP_040849" description="In isoform 3." evidence="11 14">
    <original>LLARHEQLLYV</original>
    <variation>MLEFVMREWKK</variation>
    <location>
        <begin position="85"/>
        <end position="95"/>
    </location>
</feature>
<feature type="sequence variant" id="VAR_064883" description="In dbSNP:rs181332931.">
    <original>P</original>
    <variation>L</variation>
    <location>
        <position position="8"/>
    </location>
</feature>
<feature type="sequence variant" id="VAR_064884" description="Increased proline dehydrogenase activity; dbSNP:rs2008720." evidence="7">
    <original>P</original>
    <variation>Q</variation>
    <location>
        <position position="19"/>
    </location>
</feature>
<feature type="sequence variant" id="VAR_064885" description="In dbSNP:rs3815655.">
    <original>P</original>
    <variation>S</variation>
    <location>
        <position position="30"/>
    </location>
</feature>
<feature type="sequence variant" id="VAR_064886" description="In dbSNP:rs146648839.">
    <original>A</original>
    <variation>T</variation>
    <location>
        <position position="58"/>
    </location>
</feature>
<feature type="sequence variant" id="VAR_029563" description="Probable risk factor for SCZD4; moderate reduction of enzymatic activity; dbSNP:rs761544165." evidence="7">
    <original>A</original>
    <variation>V</variation>
    <location>
        <position position="167"/>
    </location>
</feature>
<feature type="sequence variant" id="VAR_029565" description="Increased proline dehydrogenase activity; dbSNP:rs4819756." evidence="7">
    <original>W</original>
    <variation>R</variation>
    <location>
        <position position="185"/>
    </location>
</feature>
<feature type="sequence variant" id="VAR_029874" description="In dbSNP:rs5747933." evidence="9">
    <original>T</original>
    <variation>N</variation>
    <location>
        <position position="275"/>
    </location>
</feature>
<feature type="sequence variant" id="VAR_029566" description="In HYRPRO1; uncertain significance; mild decrease of enzymatic activity; dbSNP:rs137852934." evidence="5 7">
    <original>L</original>
    <variation>M</variation>
    <location>
        <position position="289"/>
    </location>
</feature>
<feature type="sequence variant" id="VAR_029567" description="Probable risk factor for SCZD4; strongly reduced enzymatic activity; dbSNP:rs3970555." evidence="4 7">
    <original>P</original>
    <variation>L</variation>
    <location>
        <position position="406"/>
    </location>
</feature>
<feature type="sequence variant" id="VAR_029568" description="In HYRPRO1; moderate reduction of enzymatic activity." evidence="7">
    <original>D</original>
    <variation>N</variation>
    <location>
        <position position="426"/>
    </location>
</feature>
<feature type="sequence variant" id="VAR_029569" description="In HYRPRO1; benign; moderate reduction of enzymatic activity; dbSNP:rs2238731." evidence="4 7">
    <original>V</original>
    <variation>M</variation>
    <location>
        <position position="427"/>
    </location>
</feature>
<feature type="sequence variant" id="VAR_029570" description="In HYRPRO1; benign; moderate reduction of enzymatic activity; dbSNP:rs2904552." evidence="5 7 9">
    <original>R</original>
    <variation>H</variation>
    <location>
        <position position="431"/>
    </location>
</feature>
<feature type="sequence variant" id="VAR_029571" description="In HYRPRO1; uncertain significance; probable risk factor for SCZD4; strongly reduced enzymatic activity; dbSNP:rs2904551." evidence="4 5 7">
    <original>L</original>
    <variation>P</variation>
    <location>
        <position position="441"/>
    </location>
</feature>
<feature type="sequence variant" id="VAR_029875" description="In dbSNP:rs765090516." evidence="9">
    <original>G</original>
    <variation>D</variation>
    <location>
        <position position="444"/>
    </location>
</feature>
<feature type="sequence variant" id="VAR_029572" description="In HYRPRO1; uncertain significance; probable risk factor for SCZD4; strongly reduced enzymatic activity; dbSNP:rs3970559." evidence="4 5 7">
    <original>R</original>
    <variation>C</variation>
    <location>
        <position position="453"/>
    </location>
</feature>
<feature type="sequence variant" id="VAR_029573" description="In HYRPRO1; uncertain significance; mild decrease of enzymatic activity; dbSNP:rs1807467." evidence="5 7">
    <original>A</original>
    <variation>S</variation>
    <location>
        <position position="455"/>
    </location>
</feature>
<feature type="sequence variant" id="VAR_029574" description="Probable risk factor for SCZD4; strongly reduced affinity for FAD; strongly reduced enzymatic activity; dbSNP:rs2870984." evidence="4 7">
    <original>T</original>
    <variation>M</variation>
    <location>
        <position position="466"/>
    </location>
</feature>
<feature type="sequence variant" id="VAR_029575" description="In HYRPRO1; benign; mild decrease of enzymatic activity; dbSNP:rs2870983." evidence="4 5 7">
    <original>A</original>
    <variation>T</variation>
    <location>
        <position position="472"/>
    </location>
</feature>
<feature type="sequence variant" id="VAR_036566" description="In a breast cancer sample; somatic mutation; dbSNP:rs139903009." evidence="8">
    <original>N</original>
    <variation>S</variation>
    <location>
        <position position="488"/>
    </location>
</feature>
<feature type="sequence variant" id="VAR_029577" description="In HYRPRO1; likely benign; risk factor for SCZD4; decreased proline dehydrogenase activity; dbSNP:rs450046." evidence="4 5 6 7">
    <original>R</original>
    <variation>Q</variation>
    <location>
        <position position="521"/>
    </location>
</feature>
<feature type="sequence conflict" description="In Ref. 5; AAH94736." evidence="15" ref="5">
    <original>Y</original>
    <variation>F</variation>
    <location>
        <position position="144"/>
    </location>
</feature>
<feature type="sequence conflict" description="In Ref. 1; AAB88789." evidence="15" ref="1">
    <original>T</original>
    <variation>S</variation>
    <location>
        <position position="164"/>
    </location>
</feature>
<feature type="sequence conflict" description="In Ref. 5; AAH68260." evidence="15" ref="5">
    <original>P</original>
    <variation>H</variation>
    <location>
        <position position="343"/>
    </location>
</feature>
<feature type="sequence conflict" description="In Ref. 3; AAF21464." evidence="15" ref="3">
    <original>R</original>
    <variation>G</variation>
    <location>
        <position position="347"/>
    </location>
</feature>
<feature type="sequence conflict" description="In Ref. 7; AAC39529." evidence="15" ref="7">
    <original>AE</original>
    <variation>Q</variation>
    <location>
        <begin position="455"/>
        <end position="456"/>
    </location>
</feature>
<feature type="sequence conflict" description="In Ref. 6; BAD92709." evidence="15" ref="6">
    <original>L</original>
    <variation>F</variation>
    <location>
        <position position="571"/>
    </location>
</feature>
<feature type="sequence conflict" description="In Ref. 7; AAC39529." evidence="15" ref="7">
    <original>R</original>
    <variation>K</variation>
    <location>
        <position position="588"/>
    </location>
</feature>
<feature type="sequence conflict" description="In Ref. 5; AAH68260." evidence="15" ref="5">
    <original>F</original>
    <variation>L</variation>
    <location>
        <position position="596"/>
    </location>
</feature>
<organism>
    <name type="scientific">Homo sapiens</name>
    <name type="common">Human</name>
    <dbReference type="NCBI Taxonomy" id="9606"/>
    <lineage>
        <taxon>Eukaryota</taxon>
        <taxon>Metazoa</taxon>
        <taxon>Chordata</taxon>
        <taxon>Craniata</taxon>
        <taxon>Vertebrata</taxon>
        <taxon>Euteleostomi</taxon>
        <taxon>Mammalia</taxon>
        <taxon>Eutheria</taxon>
        <taxon>Euarchontoglires</taxon>
        <taxon>Primates</taxon>
        <taxon>Haplorrhini</taxon>
        <taxon>Catarrhini</taxon>
        <taxon>Hominidae</taxon>
        <taxon>Homo</taxon>
    </lineage>
</organism>
<accession>O43272</accession>
<accession>A0A087WWM6</accession>
<accession>A6NF53</accession>
<accession>O14680</accession>
<accession>Q0P507</accession>
<accession>Q147W8</accession>
<accession>Q504W1</accession>
<accession>Q59FI8</accession>
<accession>Q6NV86</accession>
<accession>Q9UF13</accession>
<proteinExistence type="evidence at protein level"/>
<protein>
    <recommendedName>
        <fullName evidence="15">Proline dehydrogenase 1, mitochondrial</fullName>
        <ecNumber evidence="7">1.5.5.2</ecNumber>
    </recommendedName>
    <alternativeName>
        <fullName>Proline oxidase</fullName>
    </alternativeName>
    <alternativeName>
        <fullName>Proline oxidase 2</fullName>
    </alternativeName>
    <alternativeName>
        <fullName>p53-induced gene 6 protein</fullName>
    </alternativeName>
</protein>
<gene>
    <name evidence="16" type="primary">PRODH</name>
    <name type="synonym">PIG6</name>
    <name type="synonym">POX2</name>
    <name evidence="12" type="synonym">PRODH2</name>
</gene>
<name>PROD_HUMAN</name>
<comment type="function">
    <text evidence="7">Converts proline to delta-1-pyrroline-5-carboxylate.</text>
</comment>
<comment type="catalytic activity">
    <reaction evidence="7">
        <text>L-proline + a quinone = (S)-1-pyrroline-5-carboxylate + a quinol + H(+)</text>
        <dbReference type="Rhea" id="RHEA:23784"/>
        <dbReference type="ChEBI" id="CHEBI:15378"/>
        <dbReference type="ChEBI" id="CHEBI:17388"/>
        <dbReference type="ChEBI" id="CHEBI:24646"/>
        <dbReference type="ChEBI" id="CHEBI:60039"/>
        <dbReference type="ChEBI" id="CHEBI:132124"/>
        <dbReference type="EC" id="1.5.5.2"/>
    </reaction>
</comment>
<comment type="cofactor">
    <cofactor evidence="7">
        <name>FAD</name>
        <dbReference type="ChEBI" id="CHEBI:57692"/>
    </cofactor>
</comment>
<comment type="pathway">
    <text>Amino-acid degradation; L-proline degradation into L-glutamate; L-glutamate from L-proline: step 1/2.</text>
</comment>
<comment type="subcellular location">
    <subcellularLocation>
        <location>Mitochondrion matrix</location>
    </subcellularLocation>
</comment>
<comment type="alternative products">
    <event type="alternative splicing"/>
    <isoform>
        <id>O43272-4</id>
        <name>1</name>
        <sequence type="displayed"/>
    </isoform>
    <isoform>
        <id>O43272-2</id>
        <name>2</name>
        <sequence type="described" ref="VSP_021848"/>
    </isoform>
    <isoform>
        <id>O43272-1</id>
        <name>3</name>
        <sequence type="described" ref="VSP_040848 VSP_040849"/>
    </isoform>
</comment>
<comment type="tissue specificity">
    <text>Expressed in lung, skeletal muscle and brain, to a lesser extent in heart and kidney, and weakly in liver, placenta and pancreas.</text>
</comment>
<comment type="induction">
    <text evidence="10">During p53/TP53-induced apoptosis.</text>
</comment>
<comment type="disease" evidence="4 5 7 9">
    <disease id="DI-01782">
        <name>Hyperprolinemia 1</name>
        <acronym>HYRPRO1</acronym>
        <description>An inborn error of proline metabolism resulting in elevated levels of proline in the plasma and urine. The disorder is generally benign and most affected individuals are clinically asymptomatic. Some patients, however, have neurologic manifestations, including epilepsy and intellectual disability. Association with certain forms of schizophrenia have been reported.</description>
        <dbReference type="MIM" id="239500"/>
    </disease>
    <text>The disease is caused by variants affecting the gene represented in this entry.</text>
</comment>
<comment type="disease" evidence="4">
    <disease id="DI-02512">
        <name>Schizophrenia 4</name>
        <acronym>SCZD4</acronym>
        <description>A complex, multifactorial psychotic disorder or group of disorders characterized by disturbances in the form and content of thought (e.g. delusions, hallucinations), in mood (e.g. inappropriate affect), in sense of self and relationship to the external world (e.g. loss of ego boundaries, withdrawal), and in behavior (e.g bizarre or apparently purposeless behavior). Although it affects emotions, it is distinguished from mood disorders in which such disturbances are primary. Similarly, there may be mild impairment of cognitive function, and it is distinguished from the dementias in which disturbed cognitive function is considered primary. Some patients manifest schizophrenic as well as bipolar disorder symptoms and are often given the diagnosis of schizoaffective disorder.</description>
        <dbReference type="MIM" id="600850"/>
    </disease>
    <text>Disease susceptibility is associated with variants affecting the gene represented in this entry.</text>
</comment>
<comment type="similarity">
    <text evidence="15">Belongs to the proline oxidase family.</text>
</comment>
<comment type="sequence caution" evidence="15">
    <conflict type="frameshift">
        <sequence resource="EMBL-CDS" id="AAC39529"/>
    </conflict>
</comment>
<comment type="sequence caution" evidence="15">
    <conflict type="frameshift">
        <sequence resource="EMBL-CDS" id="AAH68260"/>
    </conflict>
</comment>
<comment type="sequence caution" evidence="15">
    <conflict type="frameshift">
        <sequence resource="EMBL-CDS" id="AAH94736"/>
    </conflict>
</comment>
<comment type="sequence caution" evidence="15">
    <conflict type="miscellaneous discrepancy">
        <sequence resource="EMBL-CDS" id="AAH94736"/>
    </conflict>
    <text>Artifact. Missing internal sequence that doesn't correspond to an exon-intron boundary.</text>
</comment>
<comment type="sequence caution" evidence="15">
    <conflict type="miscellaneous discrepancy">
        <sequence resource="EMBL-CDS" id="BAD92709"/>
    </conflict>
    <text>Intron retention. Includes intronic sequence at the 5' end.</text>
</comment>